<feature type="chain" id="PRO_0000261367" description="Galactose/methyl galactoside import ATP-binding protein MglA">
    <location>
        <begin position="1"/>
        <end position="500"/>
    </location>
</feature>
<feature type="domain" description="ABC transporter 1" evidence="1">
    <location>
        <begin position="8"/>
        <end position="243"/>
    </location>
</feature>
<feature type="domain" description="ABC transporter 2" evidence="1">
    <location>
        <begin position="257"/>
        <end position="500"/>
    </location>
</feature>
<feature type="binding site" evidence="1">
    <location>
        <begin position="40"/>
        <end position="47"/>
    </location>
    <ligand>
        <name>ATP</name>
        <dbReference type="ChEBI" id="CHEBI:30616"/>
    </ligand>
</feature>
<comment type="function">
    <text evidence="1">Part of the ABC transporter complex MglABC involved in galactose/methyl galactoside import. Responsible for energy coupling to the transport system.</text>
</comment>
<comment type="catalytic activity">
    <reaction evidence="1">
        <text>D-galactose(out) + ATP + H2O = D-galactose(in) + ADP + phosphate + H(+)</text>
        <dbReference type="Rhea" id="RHEA:60156"/>
        <dbReference type="ChEBI" id="CHEBI:4139"/>
        <dbReference type="ChEBI" id="CHEBI:15377"/>
        <dbReference type="ChEBI" id="CHEBI:15378"/>
        <dbReference type="ChEBI" id="CHEBI:30616"/>
        <dbReference type="ChEBI" id="CHEBI:43474"/>
        <dbReference type="ChEBI" id="CHEBI:456216"/>
        <dbReference type="EC" id="7.5.2.11"/>
    </reaction>
    <physiologicalReaction direction="left-to-right" evidence="1">
        <dbReference type="Rhea" id="RHEA:60157"/>
    </physiologicalReaction>
</comment>
<comment type="catalytic activity">
    <reaction evidence="1">
        <text>methyl beta-D-galactoside(out) + ATP + H2O = methyl beta-D-galactoside(in) + ADP + phosphate + H(+)</text>
        <dbReference type="Rhea" id="RHEA:72531"/>
        <dbReference type="ChEBI" id="CHEBI:15377"/>
        <dbReference type="ChEBI" id="CHEBI:15378"/>
        <dbReference type="ChEBI" id="CHEBI:17540"/>
        <dbReference type="ChEBI" id="CHEBI:30616"/>
        <dbReference type="ChEBI" id="CHEBI:43474"/>
        <dbReference type="ChEBI" id="CHEBI:456216"/>
    </reaction>
    <physiologicalReaction direction="left-to-right" evidence="1">
        <dbReference type="Rhea" id="RHEA:72532"/>
    </physiologicalReaction>
</comment>
<comment type="subunit">
    <text evidence="1">The complex is composed of one ATP-binding protein (MglA), two transmembrane proteins (MglC) and a solute-binding protein (MglB).</text>
</comment>
<comment type="subcellular location">
    <subcellularLocation>
        <location evidence="1">Cell inner membrane</location>
        <topology evidence="1">Peripheral membrane protein</topology>
    </subcellularLocation>
</comment>
<comment type="similarity">
    <text evidence="1">Belongs to the ABC transporter superfamily. Galactose/methyl galactoside importer (TC 3.A.1.2.3) family.</text>
</comment>
<gene>
    <name evidence="1" type="primary">mglA</name>
    <name type="ordered locus">FN1166</name>
</gene>
<sequence>MENLKYVLEMENISKEFPGVKALDDVQLKLKPGTVHALMGENGAGKSTLMKCLFGIYEKNSGKILLDGVEVNFKSTKEALENGVSMVHQELNQVLQRNVLDNIWLGRYPMKGFFVDEKKMYNDTINIFKDLDIKVDPRKKVADLPIAERQMIEIAKAVSYKSKVIVMDEPTSSLTEKEVDHLFRIIKKLKESGVGIIYISHKMEEIKMISDEITILRDGKWISTNDVSKISTEQIISMMVGRDLTERFPKKDNKAKEMILEVKNLTALNQPSIQDVSFELYKGEILGIAGLVGSKRTEIVETIFGMRPKKHGEIILNGKTVKNKSPEDAIKNGFALVTEERRSTGIFSMLDVAFNSVISNLDRYKNKFRLLKNKDIEKDTKWIVDSMRVKTPSYSTKIGSLSGGNQQKVIIGRWLLTEPEVLMLDEPTRGIDVLAKYEIYQLMIDLAKKDKGIIMISSEMPELLGVTDRILVMSNGRVAGIVKTSETNQEEIMELSAKYL</sequence>
<evidence type="ECO:0000255" key="1">
    <source>
        <dbReference type="HAMAP-Rule" id="MF_01717"/>
    </source>
</evidence>
<proteinExistence type="inferred from homology"/>
<dbReference type="EC" id="7.5.2.11" evidence="1"/>
<dbReference type="EMBL" id="AE009951">
    <property type="protein sequence ID" value="AAL95362.1"/>
    <property type="molecule type" value="Genomic_DNA"/>
</dbReference>
<dbReference type="RefSeq" id="NP_604063.1">
    <property type="nucleotide sequence ID" value="NC_003454.1"/>
</dbReference>
<dbReference type="RefSeq" id="WP_005903113.1">
    <property type="nucleotide sequence ID" value="NZ_OZ209243.1"/>
</dbReference>
<dbReference type="SMR" id="Q8REE1"/>
<dbReference type="FunCoup" id="Q8REE1">
    <property type="interactions" value="52"/>
</dbReference>
<dbReference type="STRING" id="190304.FN1166"/>
<dbReference type="PaxDb" id="190304-FN1166"/>
<dbReference type="EnsemblBacteria" id="AAL95362">
    <property type="protein sequence ID" value="AAL95362"/>
    <property type="gene ID" value="FN1166"/>
</dbReference>
<dbReference type="GeneID" id="79784146"/>
<dbReference type="KEGG" id="fnu:FN1166"/>
<dbReference type="PATRIC" id="fig|190304.8.peg.1731"/>
<dbReference type="eggNOG" id="COG1129">
    <property type="taxonomic scope" value="Bacteria"/>
</dbReference>
<dbReference type="HOGENOM" id="CLU_000604_92_3_0"/>
<dbReference type="InParanoid" id="Q8REE1"/>
<dbReference type="BioCyc" id="FNUC190304:G1FZS-1745-MONOMER"/>
<dbReference type="Proteomes" id="UP000002521">
    <property type="component" value="Chromosome"/>
</dbReference>
<dbReference type="GO" id="GO:0005886">
    <property type="term" value="C:plasma membrane"/>
    <property type="evidence" value="ECO:0007669"/>
    <property type="project" value="UniProtKB-SubCell"/>
</dbReference>
<dbReference type="GO" id="GO:0005524">
    <property type="term" value="F:ATP binding"/>
    <property type="evidence" value="ECO:0007669"/>
    <property type="project" value="UniProtKB-KW"/>
</dbReference>
<dbReference type="GO" id="GO:0016887">
    <property type="term" value="F:ATP hydrolysis activity"/>
    <property type="evidence" value="ECO:0007669"/>
    <property type="project" value="InterPro"/>
</dbReference>
<dbReference type="CDD" id="cd03216">
    <property type="entry name" value="ABC_Carb_Monos_I"/>
    <property type="match status" value="1"/>
</dbReference>
<dbReference type="CDD" id="cd03215">
    <property type="entry name" value="ABC_Carb_Monos_II"/>
    <property type="match status" value="1"/>
</dbReference>
<dbReference type="FunFam" id="3.40.50.300:FF:000126">
    <property type="entry name" value="Galactose/methyl galactoside import ATP-binding protein MglA"/>
    <property type="match status" value="1"/>
</dbReference>
<dbReference type="FunFam" id="3.40.50.300:FF:000127">
    <property type="entry name" value="Ribose import ATP-binding protein RbsA"/>
    <property type="match status" value="1"/>
</dbReference>
<dbReference type="Gene3D" id="3.40.50.300">
    <property type="entry name" value="P-loop containing nucleotide triphosphate hydrolases"/>
    <property type="match status" value="2"/>
</dbReference>
<dbReference type="InterPro" id="IPR003593">
    <property type="entry name" value="AAA+_ATPase"/>
</dbReference>
<dbReference type="InterPro" id="IPR050107">
    <property type="entry name" value="ABC_carbohydrate_import_ATPase"/>
</dbReference>
<dbReference type="InterPro" id="IPR003439">
    <property type="entry name" value="ABC_transporter-like_ATP-bd"/>
</dbReference>
<dbReference type="InterPro" id="IPR017871">
    <property type="entry name" value="ABC_transporter-like_CS"/>
</dbReference>
<dbReference type="InterPro" id="IPR027417">
    <property type="entry name" value="P-loop_NTPase"/>
</dbReference>
<dbReference type="NCBIfam" id="NF008215">
    <property type="entry name" value="PRK10982.1"/>
    <property type="match status" value="1"/>
</dbReference>
<dbReference type="PANTHER" id="PTHR43790">
    <property type="entry name" value="CARBOHYDRATE TRANSPORT ATP-BINDING PROTEIN MG119-RELATED"/>
    <property type="match status" value="1"/>
</dbReference>
<dbReference type="PANTHER" id="PTHR43790:SF7">
    <property type="entry name" value="GALACTOSE_METHYL GALACTOSIDE IMPORT ATP-BINDING PROTEIN MGLA"/>
    <property type="match status" value="1"/>
</dbReference>
<dbReference type="Pfam" id="PF00005">
    <property type="entry name" value="ABC_tran"/>
    <property type="match status" value="2"/>
</dbReference>
<dbReference type="SMART" id="SM00382">
    <property type="entry name" value="AAA"/>
    <property type="match status" value="2"/>
</dbReference>
<dbReference type="SUPFAM" id="SSF52540">
    <property type="entry name" value="P-loop containing nucleoside triphosphate hydrolases"/>
    <property type="match status" value="2"/>
</dbReference>
<dbReference type="PROSITE" id="PS00211">
    <property type="entry name" value="ABC_TRANSPORTER_1"/>
    <property type="match status" value="1"/>
</dbReference>
<dbReference type="PROSITE" id="PS50893">
    <property type="entry name" value="ABC_TRANSPORTER_2"/>
    <property type="match status" value="2"/>
</dbReference>
<dbReference type="PROSITE" id="PS51260">
    <property type="entry name" value="MGLA"/>
    <property type="match status" value="1"/>
</dbReference>
<accession>Q8REE1</accession>
<name>MGLA_FUSNN</name>
<reference key="1">
    <citation type="journal article" date="2002" name="J. Bacteriol.">
        <title>Genome sequence and analysis of the oral bacterium Fusobacterium nucleatum strain ATCC 25586.</title>
        <authorList>
            <person name="Kapatral V."/>
            <person name="Anderson I."/>
            <person name="Ivanova N."/>
            <person name="Reznik G."/>
            <person name="Los T."/>
            <person name="Lykidis A."/>
            <person name="Bhattacharyya A."/>
            <person name="Bartman A."/>
            <person name="Gardner W."/>
            <person name="Grechkin G."/>
            <person name="Zhu L."/>
            <person name="Vasieva O."/>
            <person name="Chu L."/>
            <person name="Kogan Y."/>
            <person name="Chaga O."/>
            <person name="Goltsman E."/>
            <person name="Bernal A."/>
            <person name="Larsen N."/>
            <person name="D'Souza M."/>
            <person name="Walunas T."/>
            <person name="Pusch G."/>
            <person name="Haselkorn R."/>
            <person name="Fonstein M."/>
            <person name="Kyrpides N.C."/>
            <person name="Overbeek R."/>
        </authorList>
    </citation>
    <scope>NUCLEOTIDE SEQUENCE [LARGE SCALE GENOMIC DNA]</scope>
    <source>
        <strain>ATCC 25586 / DSM 15643 / BCRC 10681 / CIP 101130 / JCM 8532 / KCTC 2640 / LMG 13131 / VPI 4355</strain>
    </source>
</reference>
<keyword id="KW-0067">ATP-binding</keyword>
<keyword id="KW-0997">Cell inner membrane</keyword>
<keyword id="KW-1003">Cell membrane</keyword>
<keyword id="KW-0472">Membrane</keyword>
<keyword id="KW-0547">Nucleotide-binding</keyword>
<keyword id="KW-1185">Reference proteome</keyword>
<keyword id="KW-0677">Repeat</keyword>
<keyword id="KW-0762">Sugar transport</keyword>
<keyword id="KW-1278">Translocase</keyword>
<keyword id="KW-0813">Transport</keyword>
<organism>
    <name type="scientific">Fusobacterium nucleatum subsp. nucleatum (strain ATCC 25586 / DSM 15643 / BCRC 10681 / CIP 101130 / JCM 8532 / KCTC 2640 / LMG 13131 / VPI 4355)</name>
    <dbReference type="NCBI Taxonomy" id="190304"/>
    <lineage>
        <taxon>Bacteria</taxon>
        <taxon>Fusobacteriati</taxon>
        <taxon>Fusobacteriota</taxon>
        <taxon>Fusobacteriia</taxon>
        <taxon>Fusobacteriales</taxon>
        <taxon>Fusobacteriaceae</taxon>
        <taxon>Fusobacterium</taxon>
    </lineage>
</organism>
<protein>
    <recommendedName>
        <fullName evidence="1">Galactose/methyl galactoside import ATP-binding protein MglA</fullName>
        <ecNumber evidence="1">7.5.2.11</ecNumber>
    </recommendedName>
</protein>